<evidence type="ECO:0000305" key="1"/>
<dbReference type="EMBL" id="U24159">
    <property type="protein sequence ID" value="AAB09187.1"/>
    <property type="molecule type" value="Genomic_DNA"/>
</dbReference>
<dbReference type="PIR" id="S69508">
    <property type="entry name" value="S69508"/>
</dbReference>
<dbReference type="RefSeq" id="NP_043471.1">
    <property type="nucleotide sequence ID" value="NC_001697.1"/>
</dbReference>
<dbReference type="SMR" id="P51704"/>
<dbReference type="GeneID" id="1261147"/>
<dbReference type="KEGG" id="vg:1261147"/>
<dbReference type="Proteomes" id="UP000001713">
    <property type="component" value="Segment"/>
</dbReference>
<dbReference type="GO" id="GO:0003677">
    <property type="term" value="F:DNA binding"/>
    <property type="evidence" value="ECO:0007669"/>
    <property type="project" value="UniProtKB-KW"/>
</dbReference>
<dbReference type="GO" id="GO:0045892">
    <property type="term" value="P:negative regulation of DNA-templated transcription"/>
    <property type="evidence" value="ECO:0007669"/>
    <property type="project" value="InterPro"/>
</dbReference>
<dbReference type="GO" id="GO:0051259">
    <property type="term" value="P:protein complex oligomerization"/>
    <property type="evidence" value="ECO:0007669"/>
    <property type="project" value="InterPro"/>
</dbReference>
<dbReference type="Gene3D" id="1.10.260.40">
    <property type="entry name" value="lambda repressor-like DNA-binding domains"/>
    <property type="match status" value="1"/>
</dbReference>
<dbReference type="Gene3D" id="2.10.109.10">
    <property type="entry name" value="Umud Fragment, subunit A"/>
    <property type="match status" value="1"/>
</dbReference>
<dbReference type="InterPro" id="IPR010982">
    <property type="entry name" value="Lambda_DNA-bd_dom_sf"/>
</dbReference>
<dbReference type="InterPro" id="IPR032499">
    <property type="entry name" value="Phage_CI_C"/>
</dbReference>
<dbReference type="InterPro" id="IPR010744">
    <property type="entry name" value="Phage_CI_N"/>
</dbReference>
<dbReference type="Pfam" id="PF16452">
    <property type="entry name" value="Phage_CI_C"/>
    <property type="match status" value="1"/>
</dbReference>
<dbReference type="Pfam" id="PF07022">
    <property type="entry name" value="Phage_CI_repr"/>
    <property type="match status" value="1"/>
</dbReference>
<keyword id="KW-0238">DNA-binding</keyword>
<keyword id="KW-1185">Reference proteome</keyword>
<keyword id="KW-0678">Repressor</keyword>
<keyword id="KW-0804">Transcription</keyword>
<keyword id="KW-0805">Transcription regulation</keyword>
<feature type="chain" id="PRO_0000165305" description="Repressor protein CI">
    <location>
        <begin position="1"/>
        <end position="191"/>
    </location>
</feature>
<accession>P51704</accession>
<organismHost>
    <name type="scientific">Haemophilus influenzae</name>
    <dbReference type="NCBI Taxonomy" id="727"/>
</organismHost>
<sequence>MKEFIGGKDVISRIMEAYGFANRRLLAEHLGMPHSTFGTWAKRGFFPAELVIRCVSETGARLDYVAYGNEPIFDNSDDLKYFHTIKLESGKSFIVENKPFLLPYLPNLDSRESYDKVFRIDEDNHTYFATSDYGNLVDGEYFVIVENSHLIRYITVLPAGKIRVDGGKFSFECELSDIDVVGKVILKMEKM</sequence>
<protein>
    <recommendedName>
        <fullName>Repressor protein CI</fullName>
    </recommendedName>
</protein>
<gene>
    <name type="primary">CI</name>
</gene>
<comment type="function">
    <text>Repressor of lysogeny.</text>
</comment>
<comment type="similarity">
    <text evidence="1">Belongs to the CI repressor protein family.</text>
</comment>
<name>RPC1_BPHC1</name>
<organism>
    <name type="scientific">Haemophilus phage HP1 (strain HP1c1)</name>
    <name type="common">Bacteriophage HP1</name>
    <dbReference type="NCBI Taxonomy" id="1289570"/>
    <lineage>
        <taxon>Viruses</taxon>
        <taxon>Duplodnaviria</taxon>
        <taxon>Heunggongvirae</taxon>
        <taxon>Uroviricota</taxon>
        <taxon>Caudoviricetes</taxon>
        <taxon>Peduoviridae</taxon>
        <taxon>Hpunavirus</taxon>
        <taxon>Haemophilus phage HP1</taxon>
    </lineage>
</organism>
<reference key="1">
    <citation type="journal article" date="1994" name="Mol. Microbiol.">
        <title>Identification of an HP1 phage protein required for site-specific excision.</title>
        <authorList>
            <person name="Esposito D."/>
            <person name="Scocca J.J."/>
        </authorList>
    </citation>
    <scope>NUCLEOTIDE SEQUENCE [GENOMIC DNA]</scope>
</reference>
<reference key="2">
    <citation type="journal article" date="1996" name="Nucleic Acids Res.">
        <title>The complete nucleotide sequence of bacteriophage HP1 DNA.</title>
        <authorList>
            <person name="Esposito D."/>
            <person name="Fitzmaurice W.P."/>
            <person name="Benjamin R.C."/>
            <person name="Goodman S.D."/>
            <person name="Waldman A.S."/>
            <person name="Scocca J.J."/>
        </authorList>
    </citation>
    <scope>NUCLEOTIDE SEQUENCE [LARGE SCALE GENOMIC DNA]</scope>
</reference>
<proteinExistence type="inferred from homology"/>